<name>ENO_BIFLO</name>
<dbReference type="EC" id="4.2.1.11" evidence="1"/>
<dbReference type="EMBL" id="AE014295">
    <property type="protein sequence ID" value="AAN24829.1"/>
    <property type="molecule type" value="Genomic_DNA"/>
</dbReference>
<dbReference type="RefSeq" id="NP_696193.1">
    <property type="nucleotide sequence ID" value="NC_004307.2"/>
</dbReference>
<dbReference type="RefSeq" id="WP_007051126.1">
    <property type="nucleotide sequence ID" value="NC_004307.2"/>
</dbReference>
<dbReference type="SMR" id="Q8G5I9"/>
<dbReference type="STRING" id="206672.BL1022"/>
<dbReference type="EnsemblBacteria" id="AAN24829">
    <property type="protein sequence ID" value="AAN24829"/>
    <property type="gene ID" value="BL1022"/>
</dbReference>
<dbReference type="GeneID" id="69577835"/>
<dbReference type="KEGG" id="blo:BL1022"/>
<dbReference type="PATRIC" id="fig|206672.9.peg.726"/>
<dbReference type="HOGENOM" id="CLU_031223_2_1_11"/>
<dbReference type="OrthoDB" id="9804716at2"/>
<dbReference type="PhylomeDB" id="Q8G5I9"/>
<dbReference type="UniPathway" id="UPA00109">
    <property type="reaction ID" value="UER00187"/>
</dbReference>
<dbReference type="Proteomes" id="UP000000439">
    <property type="component" value="Chromosome"/>
</dbReference>
<dbReference type="GO" id="GO:0009986">
    <property type="term" value="C:cell surface"/>
    <property type="evidence" value="ECO:0007669"/>
    <property type="project" value="UniProtKB-SubCell"/>
</dbReference>
<dbReference type="GO" id="GO:0005576">
    <property type="term" value="C:extracellular region"/>
    <property type="evidence" value="ECO:0007669"/>
    <property type="project" value="UniProtKB-SubCell"/>
</dbReference>
<dbReference type="GO" id="GO:0000015">
    <property type="term" value="C:phosphopyruvate hydratase complex"/>
    <property type="evidence" value="ECO:0007669"/>
    <property type="project" value="InterPro"/>
</dbReference>
<dbReference type="GO" id="GO:0000287">
    <property type="term" value="F:magnesium ion binding"/>
    <property type="evidence" value="ECO:0007669"/>
    <property type="project" value="UniProtKB-UniRule"/>
</dbReference>
<dbReference type="GO" id="GO:0004634">
    <property type="term" value="F:phosphopyruvate hydratase activity"/>
    <property type="evidence" value="ECO:0007669"/>
    <property type="project" value="UniProtKB-UniRule"/>
</dbReference>
<dbReference type="GO" id="GO:0006096">
    <property type="term" value="P:glycolytic process"/>
    <property type="evidence" value="ECO:0007669"/>
    <property type="project" value="UniProtKB-UniRule"/>
</dbReference>
<dbReference type="CDD" id="cd03313">
    <property type="entry name" value="enolase"/>
    <property type="match status" value="1"/>
</dbReference>
<dbReference type="FunFam" id="3.20.20.120:FF:000001">
    <property type="entry name" value="Enolase"/>
    <property type="match status" value="1"/>
</dbReference>
<dbReference type="FunFam" id="3.30.390.10:FF:000001">
    <property type="entry name" value="Enolase"/>
    <property type="match status" value="1"/>
</dbReference>
<dbReference type="Gene3D" id="3.20.20.120">
    <property type="entry name" value="Enolase-like C-terminal domain"/>
    <property type="match status" value="1"/>
</dbReference>
<dbReference type="Gene3D" id="3.30.390.10">
    <property type="entry name" value="Enolase-like, N-terminal domain"/>
    <property type="match status" value="1"/>
</dbReference>
<dbReference type="HAMAP" id="MF_00318">
    <property type="entry name" value="Enolase"/>
    <property type="match status" value="1"/>
</dbReference>
<dbReference type="InterPro" id="IPR000941">
    <property type="entry name" value="Enolase"/>
</dbReference>
<dbReference type="InterPro" id="IPR036849">
    <property type="entry name" value="Enolase-like_C_sf"/>
</dbReference>
<dbReference type="InterPro" id="IPR029017">
    <property type="entry name" value="Enolase-like_N"/>
</dbReference>
<dbReference type="InterPro" id="IPR020810">
    <property type="entry name" value="Enolase_C"/>
</dbReference>
<dbReference type="InterPro" id="IPR020809">
    <property type="entry name" value="Enolase_CS"/>
</dbReference>
<dbReference type="InterPro" id="IPR020811">
    <property type="entry name" value="Enolase_N"/>
</dbReference>
<dbReference type="NCBIfam" id="TIGR01060">
    <property type="entry name" value="eno"/>
    <property type="match status" value="1"/>
</dbReference>
<dbReference type="PANTHER" id="PTHR11902">
    <property type="entry name" value="ENOLASE"/>
    <property type="match status" value="1"/>
</dbReference>
<dbReference type="PANTHER" id="PTHR11902:SF1">
    <property type="entry name" value="ENOLASE"/>
    <property type="match status" value="1"/>
</dbReference>
<dbReference type="Pfam" id="PF00113">
    <property type="entry name" value="Enolase_C"/>
    <property type="match status" value="1"/>
</dbReference>
<dbReference type="Pfam" id="PF03952">
    <property type="entry name" value="Enolase_N"/>
    <property type="match status" value="1"/>
</dbReference>
<dbReference type="PIRSF" id="PIRSF001400">
    <property type="entry name" value="Enolase"/>
    <property type="match status" value="1"/>
</dbReference>
<dbReference type="PRINTS" id="PR00148">
    <property type="entry name" value="ENOLASE"/>
</dbReference>
<dbReference type="SFLD" id="SFLDF00002">
    <property type="entry name" value="enolase"/>
    <property type="match status" value="1"/>
</dbReference>
<dbReference type="SFLD" id="SFLDG00178">
    <property type="entry name" value="enolase"/>
    <property type="match status" value="1"/>
</dbReference>
<dbReference type="SMART" id="SM01192">
    <property type="entry name" value="Enolase_C"/>
    <property type="match status" value="1"/>
</dbReference>
<dbReference type="SMART" id="SM01193">
    <property type="entry name" value="Enolase_N"/>
    <property type="match status" value="1"/>
</dbReference>
<dbReference type="SUPFAM" id="SSF51604">
    <property type="entry name" value="Enolase C-terminal domain-like"/>
    <property type="match status" value="1"/>
</dbReference>
<dbReference type="SUPFAM" id="SSF54826">
    <property type="entry name" value="Enolase N-terminal domain-like"/>
    <property type="match status" value="1"/>
</dbReference>
<dbReference type="PROSITE" id="PS00164">
    <property type="entry name" value="ENOLASE"/>
    <property type="match status" value="1"/>
</dbReference>
<protein>
    <recommendedName>
        <fullName evidence="1">Enolase</fullName>
        <ecNumber evidence="1">4.2.1.11</ecNumber>
    </recommendedName>
    <alternativeName>
        <fullName evidence="1">2-phospho-D-glycerate hydro-lyase</fullName>
    </alternativeName>
    <alternativeName>
        <fullName evidence="1">2-phosphoglycerate dehydratase</fullName>
    </alternativeName>
</protein>
<proteinExistence type="inferred from homology"/>
<sequence length="432" mass="46515">MAVIESVYARQILDSRGNPTVQVVLDTEDGAQGLGLVPSGASTGEAEAWERRDGDKSVYGGKGVLNAVKAVNEVIAPKVIGMDAADQRALDDLMIELDGTPNKGKLGANAILGVSLAALYASAESAGLPLYRYIGGTNGHILPVPNMNIMNGGAHADFATDIQEYMISPYGFDTYSEALRAGVEVYHTLKNVLKKEGLNTGLGDEGGFAPKMKSNEDSLKYIMDAISAAGYEPGKQIGICLDVASSEFYNKETGKYRFDGEERDSAYMLDYYENLINEYPIVSIEDPFNEEGWEDWAAITARLGDRLQFVGDDLLVTNPARLQKAIDLGAANSLLVKLNQIGSVTETLDAIELATANGYTSMVSHRSGETPDTTISDLAVAKNTRQIKTGAPARGERVAKYNRLLEIEEELGSTAQYAGYSAFKACKKYLAK</sequence>
<organism>
    <name type="scientific">Bifidobacterium longum (strain NCC 2705)</name>
    <dbReference type="NCBI Taxonomy" id="206672"/>
    <lineage>
        <taxon>Bacteria</taxon>
        <taxon>Bacillati</taxon>
        <taxon>Actinomycetota</taxon>
        <taxon>Actinomycetes</taxon>
        <taxon>Bifidobacteriales</taxon>
        <taxon>Bifidobacteriaceae</taxon>
        <taxon>Bifidobacterium</taxon>
    </lineage>
</organism>
<feature type="chain" id="PRO_0000133846" description="Enolase">
    <location>
        <begin position="1"/>
        <end position="432"/>
    </location>
</feature>
<feature type="active site" description="Proton donor" evidence="1">
    <location>
        <position position="205"/>
    </location>
</feature>
<feature type="active site" description="Proton acceptor" evidence="1">
    <location>
        <position position="337"/>
    </location>
</feature>
<feature type="binding site" evidence="1">
    <location>
        <position position="163"/>
    </location>
    <ligand>
        <name>(2R)-2-phosphoglycerate</name>
        <dbReference type="ChEBI" id="CHEBI:58289"/>
    </ligand>
</feature>
<feature type="binding site" evidence="1">
    <location>
        <position position="242"/>
    </location>
    <ligand>
        <name>Mg(2+)</name>
        <dbReference type="ChEBI" id="CHEBI:18420"/>
    </ligand>
</feature>
<feature type="binding site" evidence="1">
    <location>
        <position position="285"/>
    </location>
    <ligand>
        <name>Mg(2+)</name>
        <dbReference type="ChEBI" id="CHEBI:18420"/>
    </ligand>
</feature>
<feature type="binding site" evidence="1">
    <location>
        <position position="312"/>
    </location>
    <ligand>
        <name>Mg(2+)</name>
        <dbReference type="ChEBI" id="CHEBI:18420"/>
    </ligand>
</feature>
<feature type="binding site" evidence="1">
    <location>
        <position position="337"/>
    </location>
    <ligand>
        <name>(2R)-2-phosphoglycerate</name>
        <dbReference type="ChEBI" id="CHEBI:58289"/>
    </ligand>
</feature>
<feature type="binding site" evidence="1">
    <location>
        <position position="366"/>
    </location>
    <ligand>
        <name>(2R)-2-phosphoglycerate</name>
        <dbReference type="ChEBI" id="CHEBI:58289"/>
    </ligand>
</feature>
<feature type="binding site" evidence="1">
    <location>
        <position position="367"/>
    </location>
    <ligand>
        <name>(2R)-2-phosphoglycerate</name>
        <dbReference type="ChEBI" id="CHEBI:58289"/>
    </ligand>
</feature>
<feature type="binding site" evidence="1">
    <location>
        <position position="388"/>
    </location>
    <ligand>
        <name>(2R)-2-phosphoglycerate</name>
        <dbReference type="ChEBI" id="CHEBI:58289"/>
    </ligand>
</feature>
<reference key="1">
    <citation type="journal article" date="2002" name="Proc. Natl. Acad. Sci. U.S.A.">
        <title>The genome sequence of Bifidobacterium longum reflects its adaptation to the human gastrointestinal tract.</title>
        <authorList>
            <person name="Schell M.A."/>
            <person name="Karmirantzou M."/>
            <person name="Snel B."/>
            <person name="Vilanova D."/>
            <person name="Berger B."/>
            <person name="Pessi G."/>
            <person name="Zwahlen M.-C."/>
            <person name="Desiere F."/>
            <person name="Bork P."/>
            <person name="Delley M."/>
            <person name="Pridmore R.D."/>
            <person name="Arigoni F."/>
        </authorList>
    </citation>
    <scope>NUCLEOTIDE SEQUENCE [LARGE SCALE GENOMIC DNA]</scope>
    <source>
        <strain>NCC 2705</strain>
    </source>
</reference>
<evidence type="ECO:0000255" key="1">
    <source>
        <dbReference type="HAMAP-Rule" id="MF_00318"/>
    </source>
</evidence>
<comment type="function">
    <text evidence="1">Catalyzes the reversible conversion of 2-phosphoglycerate (2-PG) into phosphoenolpyruvate (PEP). It is essential for the degradation of carbohydrates via glycolysis.</text>
</comment>
<comment type="catalytic activity">
    <reaction evidence="1">
        <text>(2R)-2-phosphoglycerate = phosphoenolpyruvate + H2O</text>
        <dbReference type="Rhea" id="RHEA:10164"/>
        <dbReference type="ChEBI" id="CHEBI:15377"/>
        <dbReference type="ChEBI" id="CHEBI:58289"/>
        <dbReference type="ChEBI" id="CHEBI:58702"/>
        <dbReference type="EC" id="4.2.1.11"/>
    </reaction>
</comment>
<comment type="cofactor">
    <cofactor evidence="1">
        <name>Mg(2+)</name>
        <dbReference type="ChEBI" id="CHEBI:18420"/>
    </cofactor>
    <text evidence="1">Binds a second Mg(2+) ion via substrate during catalysis.</text>
</comment>
<comment type="pathway">
    <text evidence="1">Carbohydrate degradation; glycolysis; pyruvate from D-glyceraldehyde 3-phosphate: step 4/5.</text>
</comment>
<comment type="subcellular location">
    <subcellularLocation>
        <location evidence="1">Cytoplasm</location>
    </subcellularLocation>
    <subcellularLocation>
        <location evidence="1">Secreted</location>
    </subcellularLocation>
    <subcellularLocation>
        <location evidence="1">Cell surface</location>
    </subcellularLocation>
    <text evidence="1">Fractions of enolase are present in both the cytoplasm and on the cell surface.</text>
</comment>
<comment type="similarity">
    <text evidence="1">Belongs to the enolase family.</text>
</comment>
<keyword id="KW-0963">Cytoplasm</keyword>
<keyword id="KW-0324">Glycolysis</keyword>
<keyword id="KW-0456">Lyase</keyword>
<keyword id="KW-0460">Magnesium</keyword>
<keyword id="KW-0479">Metal-binding</keyword>
<keyword id="KW-1185">Reference proteome</keyword>
<keyword id="KW-0964">Secreted</keyword>
<gene>
    <name evidence="1" type="primary">eno</name>
    <name type="ordered locus">BL1022</name>
</gene>
<accession>Q8G5I9</accession>